<gene>
    <name evidence="1" type="primary">moaA</name>
    <name type="ordered locus">Tola_1760</name>
</gene>
<name>MOAA_TOLAT</name>
<proteinExistence type="inferred from homology"/>
<reference key="1">
    <citation type="submission" date="2009-05" db="EMBL/GenBank/DDBJ databases">
        <title>Complete sequence of Tolumonas auensis DSM 9187.</title>
        <authorList>
            <consortium name="US DOE Joint Genome Institute"/>
            <person name="Lucas S."/>
            <person name="Copeland A."/>
            <person name="Lapidus A."/>
            <person name="Glavina del Rio T."/>
            <person name="Tice H."/>
            <person name="Bruce D."/>
            <person name="Goodwin L."/>
            <person name="Pitluck S."/>
            <person name="Chertkov O."/>
            <person name="Brettin T."/>
            <person name="Detter J.C."/>
            <person name="Han C."/>
            <person name="Larimer F."/>
            <person name="Land M."/>
            <person name="Hauser L."/>
            <person name="Kyrpides N."/>
            <person name="Mikhailova N."/>
            <person name="Spring S."/>
            <person name="Beller H."/>
        </authorList>
    </citation>
    <scope>NUCLEOTIDE SEQUENCE [LARGE SCALE GENOMIC DNA]</scope>
    <source>
        <strain>DSM 9187 / NBRC 110442 / TA 4</strain>
    </source>
</reference>
<organism>
    <name type="scientific">Tolumonas auensis (strain DSM 9187 / NBRC 110442 / TA 4)</name>
    <dbReference type="NCBI Taxonomy" id="595494"/>
    <lineage>
        <taxon>Bacteria</taxon>
        <taxon>Pseudomonadati</taxon>
        <taxon>Pseudomonadota</taxon>
        <taxon>Gammaproteobacteria</taxon>
        <taxon>Aeromonadales</taxon>
        <taxon>Aeromonadaceae</taxon>
        <taxon>Tolumonas</taxon>
    </lineage>
</organism>
<protein>
    <recommendedName>
        <fullName evidence="1">GTP 3',8-cyclase</fullName>
        <ecNumber evidence="1">4.1.99.22</ecNumber>
    </recommendedName>
    <alternativeName>
        <fullName evidence="1">Molybdenum cofactor biosynthesis protein A</fullName>
    </alternativeName>
</protein>
<keyword id="KW-0004">4Fe-4S</keyword>
<keyword id="KW-0342">GTP-binding</keyword>
<keyword id="KW-0408">Iron</keyword>
<keyword id="KW-0411">Iron-sulfur</keyword>
<keyword id="KW-0456">Lyase</keyword>
<keyword id="KW-0479">Metal-binding</keyword>
<keyword id="KW-0501">Molybdenum cofactor biosynthesis</keyword>
<keyword id="KW-0547">Nucleotide-binding</keyword>
<keyword id="KW-1185">Reference proteome</keyword>
<keyword id="KW-0949">S-adenosyl-L-methionine</keyword>
<evidence type="ECO:0000255" key="1">
    <source>
        <dbReference type="HAMAP-Rule" id="MF_01225"/>
    </source>
</evidence>
<evidence type="ECO:0000255" key="2">
    <source>
        <dbReference type="PROSITE-ProRule" id="PRU01266"/>
    </source>
</evidence>
<comment type="function">
    <text evidence="1">Catalyzes the cyclization of GTP to (8S)-3',8-cyclo-7,8-dihydroguanosine 5'-triphosphate.</text>
</comment>
<comment type="catalytic activity">
    <reaction evidence="1">
        <text>GTP + AH2 + S-adenosyl-L-methionine = (8S)-3',8-cyclo-7,8-dihydroguanosine 5'-triphosphate + 5'-deoxyadenosine + L-methionine + A + H(+)</text>
        <dbReference type="Rhea" id="RHEA:49576"/>
        <dbReference type="ChEBI" id="CHEBI:13193"/>
        <dbReference type="ChEBI" id="CHEBI:15378"/>
        <dbReference type="ChEBI" id="CHEBI:17319"/>
        <dbReference type="ChEBI" id="CHEBI:17499"/>
        <dbReference type="ChEBI" id="CHEBI:37565"/>
        <dbReference type="ChEBI" id="CHEBI:57844"/>
        <dbReference type="ChEBI" id="CHEBI:59789"/>
        <dbReference type="ChEBI" id="CHEBI:131766"/>
        <dbReference type="EC" id="4.1.99.22"/>
    </reaction>
</comment>
<comment type="cofactor">
    <cofactor evidence="1">
        <name>[4Fe-4S] cluster</name>
        <dbReference type="ChEBI" id="CHEBI:49883"/>
    </cofactor>
    <text evidence="1">Binds 2 [4Fe-4S] clusters. Binds 1 [4Fe-4S] cluster coordinated with 3 cysteines and an exchangeable S-adenosyl-L-methionine and 1 [4Fe-4S] cluster coordinated with 3 cysteines and the GTP-derived substrate.</text>
</comment>
<comment type="pathway">
    <text evidence="1">Cofactor biosynthesis; molybdopterin biosynthesis.</text>
</comment>
<comment type="subunit">
    <text evidence="1">Monomer and homodimer.</text>
</comment>
<comment type="similarity">
    <text evidence="1">Belongs to the radical SAM superfamily. MoaA family.</text>
</comment>
<sequence length="336" mass="38323">MHWPPEFGKVFMILEDGFSRRFHYLRLSVTEACNFRCTYCLPDGYRPDGRKSFLTVDEIRRVVYGFAELGVKKIRLTGGEPSMRRDLPAIIETVANTAGIEKVAMTTNGYRLKDRAQQWFDAGLRSLNVSIDSLDPRQFQLITGENKLVEILEGLEAAQKAGFRKIKVNTVLLKNLNDHELSQFLFWLKKQPIQLRLIELMQTGEMDARFQKHHQSGLPVKTRLLREGWTQQNRNLTDGPAEVFSHPDYQGQIGLIMPYSKDFCTNCNRLRVSSVGKLHLCLFGEEGVPLRDLLQADEQNSELQSRILEGLTHKRETHFLHDGDSGVTPHLASIGG</sequence>
<dbReference type="EC" id="4.1.99.22" evidence="1"/>
<dbReference type="EMBL" id="CP001616">
    <property type="protein sequence ID" value="ACQ93370.1"/>
    <property type="molecule type" value="Genomic_DNA"/>
</dbReference>
<dbReference type="SMR" id="C4LFK3"/>
<dbReference type="STRING" id="595494.Tola_1760"/>
<dbReference type="KEGG" id="tau:Tola_1760"/>
<dbReference type="eggNOG" id="COG2896">
    <property type="taxonomic scope" value="Bacteria"/>
</dbReference>
<dbReference type="HOGENOM" id="CLU_009273_0_1_6"/>
<dbReference type="UniPathway" id="UPA00344"/>
<dbReference type="Proteomes" id="UP000009073">
    <property type="component" value="Chromosome"/>
</dbReference>
<dbReference type="GO" id="GO:0051539">
    <property type="term" value="F:4 iron, 4 sulfur cluster binding"/>
    <property type="evidence" value="ECO:0007669"/>
    <property type="project" value="UniProtKB-UniRule"/>
</dbReference>
<dbReference type="GO" id="GO:0061799">
    <property type="term" value="F:cyclic pyranopterin monophosphate synthase activity"/>
    <property type="evidence" value="ECO:0007669"/>
    <property type="project" value="TreeGrafter"/>
</dbReference>
<dbReference type="GO" id="GO:0061798">
    <property type="term" value="F:GTP 3',8'-cyclase activity"/>
    <property type="evidence" value="ECO:0007669"/>
    <property type="project" value="UniProtKB-UniRule"/>
</dbReference>
<dbReference type="GO" id="GO:0005525">
    <property type="term" value="F:GTP binding"/>
    <property type="evidence" value="ECO:0007669"/>
    <property type="project" value="UniProtKB-UniRule"/>
</dbReference>
<dbReference type="GO" id="GO:0046872">
    <property type="term" value="F:metal ion binding"/>
    <property type="evidence" value="ECO:0007669"/>
    <property type="project" value="UniProtKB-KW"/>
</dbReference>
<dbReference type="GO" id="GO:1904047">
    <property type="term" value="F:S-adenosyl-L-methionine binding"/>
    <property type="evidence" value="ECO:0007669"/>
    <property type="project" value="UniProtKB-UniRule"/>
</dbReference>
<dbReference type="GO" id="GO:0006777">
    <property type="term" value="P:Mo-molybdopterin cofactor biosynthetic process"/>
    <property type="evidence" value="ECO:0007669"/>
    <property type="project" value="UniProtKB-UniRule"/>
</dbReference>
<dbReference type="CDD" id="cd01335">
    <property type="entry name" value="Radical_SAM"/>
    <property type="match status" value="1"/>
</dbReference>
<dbReference type="CDD" id="cd21117">
    <property type="entry name" value="Twitch_MoaA"/>
    <property type="match status" value="1"/>
</dbReference>
<dbReference type="FunFam" id="3.20.20.70:FF:000057">
    <property type="entry name" value="GTP 3',8-cyclase"/>
    <property type="match status" value="1"/>
</dbReference>
<dbReference type="Gene3D" id="3.20.20.70">
    <property type="entry name" value="Aldolase class I"/>
    <property type="match status" value="1"/>
</dbReference>
<dbReference type="HAMAP" id="MF_01225_B">
    <property type="entry name" value="MoaA_B"/>
    <property type="match status" value="1"/>
</dbReference>
<dbReference type="InterPro" id="IPR013785">
    <property type="entry name" value="Aldolase_TIM"/>
</dbReference>
<dbReference type="InterPro" id="IPR006638">
    <property type="entry name" value="Elp3/MiaA/NifB-like_rSAM"/>
</dbReference>
<dbReference type="InterPro" id="IPR013483">
    <property type="entry name" value="MoaA"/>
</dbReference>
<dbReference type="InterPro" id="IPR000385">
    <property type="entry name" value="MoaA_NifB_PqqE_Fe-S-bd_CS"/>
</dbReference>
<dbReference type="InterPro" id="IPR010505">
    <property type="entry name" value="MoaA_twitch"/>
</dbReference>
<dbReference type="InterPro" id="IPR050105">
    <property type="entry name" value="MoCo_biosynth_MoaA/MoaC"/>
</dbReference>
<dbReference type="InterPro" id="IPR007197">
    <property type="entry name" value="rSAM"/>
</dbReference>
<dbReference type="NCBIfam" id="TIGR02666">
    <property type="entry name" value="moaA"/>
    <property type="match status" value="1"/>
</dbReference>
<dbReference type="PANTHER" id="PTHR22960:SF28">
    <property type="entry name" value="GTP 3',8-CYCLASE"/>
    <property type="match status" value="1"/>
</dbReference>
<dbReference type="PANTHER" id="PTHR22960">
    <property type="entry name" value="MOLYBDOPTERIN COFACTOR SYNTHESIS PROTEIN A"/>
    <property type="match status" value="1"/>
</dbReference>
<dbReference type="Pfam" id="PF13353">
    <property type="entry name" value="Fer4_12"/>
    <property type="match status" value="1"/>
</dbReference>
<dbReference type="Pfam" id="PF06463">
    <property type="entry name" value="Mob_synth_C"/>
    <property type="match status" value="1"/>
</dbReference>
<dbReference type="Pfam" id="PF04055">
    <property type="entry name" value="Radical_SAM"/>
    <property type="match status" value="1"/>
</dbReference>
<dbReference type="SFLD" id="SFLDG01383">
    <property type="entry name" value="cyclic_pyranopterin_phosphate"/>
    <property type="match status" value="1"/>
</dbReference>
<dbReference type="SFLD" id="SFLDG01216">
    <property type="entry name" value="thioether_bond_formation_requi"/>
    <property type="match status" value="1"/>
</dbReference>
<dbReference type="SMART" id="SM00729">
    <property type="entry name" value="Elp3"/>
    <property type="match status" value="1"/>
</dbReference>
<dbReference type="SUPFAM" id="SSF102114">
    <property type="entry name" value="Radical SAM enzymes"/>
    <property type="match status" value="1"/>
</dbReference>
<dbReference type="PROSITE" id="PS01305">
    <property type="entry name" value="MOAA_NIFB_PQQE"/>
    <property type="match status" value="1"/>
</dbReference>
<dbReference type="PROSITE" id="PS51918">
    <property type="entry name" value="RADICAL_SAM"/>
    <property type="match status" value="1"/>
</dbReference>
<accession>C4LFK3</accession>
<feature type="chain" id="PRO_1000214006" description="GTP 3',8-cyclase">
    <location>
        <begin position="1"/>
        <end position="336"/>
    </location>
</feature>
<feature type="domain" description="Radical SAM core" evidence="2">
    <location>
        <begin position="17"/>
        <end position="238"/>
    </location>
</feature>
<feature type="binding site" evidence="1">
    <location>
        <position position="26"/>
    </location>
    <ligand>
        <name>GTP</name>
        <dbReference type="ChEBI" id="CHEBI:37565"/>
    </ligand>
</feature>
<feature type="binding site" evidence="1">
    <location>
        <position position="33"/>
    </location>
    <ligand>
        <name>[4Fe-4S] cluster</name>
        <dbReference type="ChEBI" id="CHEBI:49883"/>
        <label>1</label>
        <note>4Fe-4S-S-AdoMet</note>
    </ligand>
</feature>
<feature type="binding site" evidence="1">
    <location>
        <position position="37"/>
    </location>
    <ligand>
        <name>[4Fe-4S] cluster</name>
        <dbReference type="ChEBI" id="CHEBI:49883"/>
        <label>1</label>
        <note>4Fe-4S-S-AdoMet</note>
    </ligand>
</feature>
<feature type="binding site" evidence="1">
    <location>
        <position position="39"/>
    </location>
    <ligand>
        <name>S-adenosyl-L-methionine</name>
        <dbReference type="ChEBI" id="CHEBI:59789"/>
    </ligand>
</feature>
<feature type="binding site" evidence="1">
    <location>
        <position position="40"/>
    </location>
    <ligand>
        <name>[4Fe-4S] cluster</name>
        <dbReference type="ChEBI" id="CHEBI:49883"/>
        <label>1</label>
        <note>4Fe-4S-S-AdoMet</note>
    </ligand>
</feature>
<feature type="binding site" evidence="1">
    <location>
        <position position="75"/>
    </location>
    <ligand>
        <name>GTP</name>
        <dbReference type="ChEBI" id="CHEBI:37565"/>
    </ligand>
</feature>
<feature type="binding site" evidence="1">
    <location>
        <position position="79"/>
    </location>
    <ligand>
        <name>S-adenosyl-L-methionine</name>
        <dbReference type="ChEBI" id="CHEBI:59789"/>
    </ligand>
</feature>
<feature type="binding site" evidence="1">
    <location>
        <position position="106"/>
    </location>
    <ligand>
        <name>GTP</name>
        <dbReference type="ChEBI" id="CHEBI:37565"/>
    </ligand>
</feature>
<feature type="binding site" evidence="1">
    <location>
        <position position="130"/>
    </location>
    <ligand>
        <name>S-adenosyl-L-methionine</name>
        <dbReference type="ChEBI" id="CHEBI:59789"/>
    </ligand>
</feature>
<feature type="binding site" evidence="1">
    <location>
        <position position="167"/>
    </location>
    <ligand>
        <name>GTP</name>
        <dbReference type="ChEBI" id="CHEBI:37565"/>
    </ligand>
</feature>
<feature type="binding site" evidence="1">
    <location>
        <position position="201"/>
    </location>
    <ligand>
        <name>S-adenosyl-L-methionine</name>
        <dbReference type="ChEBI" id="CHEBI:59789"/>
    </ligand>
</feature>
<feature type="binding site" evidence="1">
    <location>
        <position position="264"/>
    </location>
    <ligand>
        <name>[4Fe-4S] cluster</name>
        <dbReference type="ChEBI" id="CHEBI:49883"/>
        <label>2</label>
        <note>4Fe-4S-substrate</note>
    </ligand>
</feature>
<feature type="binding site" evidence="1">
    <location>
        <position position="267"/>
    </location>
    <ligand>
        <name>[4Fe-4S] cluster</name>
        <dbReference type="ChEBI" id="CHEBI:49883"/>
        <label>2</label>
        <note>4Fe-4S-substrate</note>
    </ligand>
</feature>
<feature type="binding site" evidence="1">
    <location>
        <begin position="269"/>
        <end position="271"/>
    </location>
    <ligand>
        <name>GTP</name>
        <dbReference type="ChEBI" id="CHEBI:37565"/>
    </ligand>
</feature>
<feature type="binding site" evidence="1">
    <location>
        <position position="281"/>
    </location>
    <ligand>
        <name>[4Fe-4S] cluster</name>
        <dbReference type="ChEBI" id="CHEBI:49883"/>
        <label>2</label>
        <note>4Fe-4S-substrate</note>
    </ligand>
</feature>